<comment type="subcellular location">
    <subcellularLocation>
        <location evidence="1">Secreted</location>
    </subcellularLocation>
</comment>
<comment type="tissue specificity">
    <text evidence="2">Expressed in the brain, frontal ganglion and terminal ganglion (at protein level). Not detected in antennal heart (at protein level).</text>
</comment>
<comment type="mass spectrometry"/>
<accession>P86414</accession>
<protein>
    <recommendedName>
        <fullName evidence="3">Allatotropin-related peptide</fullName>
        <shortName evidence="3">ATRP</shortName>
    </recommendedName>
</protein>
<organism>
    <name type="scientific">Periplaneta americana</name>
    <name type="common">American cockroach</name>
    <name type="synonym">Blatta americana</name>
    <dbReference type="NCBI Taxonomy" id="6978"/>
    <lineage>
        <taxon>Eukaryota</taxon>
        <taxon>Metazoa</taxon>
        <taxon>Ecdysozoa</taxon>
        <taxon>Arthropoda</taxon>
        <taxon>Hexapoda</taxon>
        <taxon>Insecta</taxon>
        <taxon>Pterygota</taxon>
        <taxon>Neoptera</taxon>
        <taxon>Polyneoptera</taxon>
        <taxon>Dictyoptera</taxon>
        <taxon>Blattodea</taxon>
        <taxon>Blattoidea</taxon>
        <taxon>Blattidae</taxon>
        <taxon>Blattinae</taxon>
        <taxon>Periplaneta</taxon>
    </lineage>
</organism>
<keyword id="KW-0027">Amidation</keyword>
<keyword id="KW-0903">Direct protein sequencing</keyword>
<keyword id="KW-0527">Neuropeptide</keyword>
<keyword id="KW-0964">Secreted</keyword>
<name>ALLTR_PERAM</name>
<dbReference type="GO" id="GO:0005576">
    <property type="term" value="C:extracellular region"/>
    <property type="evidence" value="ECO:0000250"/>
    <property type="project" value="UniProtKB"/>
</dbReference>
<dbReference type="GO" id="GO:0007218">
    <property type="term" value="P:neuropeptide signaling pathway"/>
    <property type="evidence" value="ECO:0007669"/>
    <property type="project" value="UniProtKB-KW"/>
</dbReference>
<evidence type="ECO:0000250" key="1">
    <source>
        <dbReference type="UniProtKB" id="P21786"/>
    </source>
</evidence>
<evidence type="ECO:0000269" key="2">
    <source>
    </source>
</evidence>
<evidence type="ECO:0000303" key="3">
    <source>
    </source>
</evidence>
<evidence type="ECO:0000305" key="4"/>
<proteinExistence type="evidence at protein level"/>
<reference evidence="4" key="1">
    <citation type="journal article" date="2009" name="Peptides">
        <title>Allatotropin-related peptide in cockroaches: identification via mass spectrometric analysis of single identified neurons.</title>
        <authorList>
            <person name="Neupert S."/>
            <person name="Schattschneider S."/>
            <person name="Predel R."/>
        </authorList>
    </citation>
    <scope>PROTEIN SEQUENCE</scope>
    <scope>TISSUE SPECIFICITY</scope>
    <scope>MASS SPECTROMETRY</scope>
    <scope>AMIDATION AT PHE-13</scope>
    <source>
        <tissue evidence="2">Ganglion</tissue>
    </source>
</reference>
<feature type="peptide" id="PRO_0000390782" description="Allatotropin-related peptide" evidence="2">
    <location>
        <begin position="1"/>
        <end position="13"/>
    </location>
</feature>
<feature type="modified residue" description="Phenylalanine amide" evidence="2">
    <location>
        <position position="13"/>
    </location>
</feature>
<sequence>GFKNVALSTARGF</sequence>